<sequence>MAKTPENIAIDQLDKDQIKTFSDFLMSYNKLSETCFTDCIRDFTTRDVKDSEEKCSLNCMEKYLKMNQRVSQRFQEFQVIAHENALAMAQKTGKL</sequence>
<proteinExistence type="inferred from homology"/>
<protein>
    <recommendedName>
        <fullName>Mitochondrial import inner membrane translocase subunit Tim9</fullName>
    </recommendedName>
</protein>
<reference key="1">
    <citation type="journal article" date="2000" name="Science">
        <title>The genome sequence of Drosophila melanogaster.</title>
        <authorList>
            <person name="Adams M.D."/>
            <person name="Celniker S.E."/>
            <person name="Holt R.A."/>
            <person name="Evans C.A."/>
            <person name="Gocayne J.D."/>
            <person name="Amanatides P.G."/>
            <person name="Scherer S.E."/>
            <person name="Li P.W."/>
            <person name="Hoskins R.A."/>
            <person name="Galle R.F."/>
            <person name="George R.A."/>
            <person name="Lewis S.E."/>
            <person name="Richards S."/>
            <person name="Ashburner M."/>
            <person name="Henderson S.N."/>
            <person name="Sutton G.G."/>
            <person name="Wortman J.R."/>
            <person name="Yandell M.D."/>
            <person name="Zhang Q."/>
            <person name="Chen L.X."/>
            <person name="Brandon R.C."/>
            <person name="Rogers Y.-H.C."/>
            <person name="Blazej R.G."/>
            <person name="Champe M."/>
            <person name="Pfeiffer B.D."/>
            <person name="Wan K.H."/>
            <person name="Doyle C."/>
            <person name="Baxter E.G."/>
            <person name="Helt G."/>
            <person name="Nelson C.R."/>
            <person name="Miklos G.L.G."/>
            <person name="Abril J.F."/>
            <person name="Agbayani A."/>
            <person name="An H.-J."/>
            <person name="Andrews-Pfannkoch C."/>
            <person name="Baldwin D."/>
            <person name="Ballew R.M."/>
            <person name="Basu A."/>
            <person name="Baxendale J."/>
            <person name="Bayraktaroglu L."/>
            <person name="Beasley E.M."/>
            <person name="Beeson K.Y."/>
            <person name="Benos P.V."/>
            <person name="Berman B.P."/>
            <person name="Bhandari D."/>
            <person name="Bolshakov S."/>
            <person name="Borkova D."/>
            <person name="Botchan M.R."/>
            <person name="Bouck J."/>
            <person name="Brokstein P."/>
            <person name="Brottier P."/>
            <person name="Burtis K.C."/>
            <person name="Busam D.A."/>
            <person name="Butler H."/>
            <person name="Cadieu E."/>
            <person name="Center A."/>
            <person name="Chandra I."/>
            <person name="Cherry J.M."/>
            <person name="Cawley S."/>
            <person name="Dahlke C."/>
            <person name="Davenport L.B."/>
            <person name="Davies P."/>
            <person name="de Pablos B."/>
            <person name="Delcher A."/>
            <person name="Deng Z."/>
            <person name="Mays A.D."/>
            <person name="Dew I."/>
            <person name="Dietz S.M."/>
            <person name="Dodson K."/>
            <person name="Doup L.E."/>
            <person name="Downes M."/>
            <person name="Dugan-Rocha S."/>
            <person name="Dunkov B.C."/>
            <person name="Dunn P."/>
            <person name="Durbin K.J."/>
            <person name="Evangelista C.C."/>
            <person name="Ferraz C."/>
            <person name="Ferriera S."/>
            <person name="Fleischmann W."/>
            <person name="Fosler C."/>
            <person name="Gabrielian A.E."/>
            <person name="Garg N.S."/>
            <person name="Gelbart W.M."/>
            <person name="Glasser K."/>
            <person name="Glodek A."/>
            <person name="Gong F."/>
            <person name="Gorrell J.H."/>
            <person name="Gu Z."/>
            <person name="Guan P."/>
            <person name="Harris M."/>
            <person name="Harris N.L."/>
            <person name="Harvey D.A."/>
            <person name="Heiman T.J."/>
            <person name="Hernandez J.R."/>
            <person name="Houck J."/>
            <person name="Hostin D."/>
            <person name="Houston K.A."/>
            <person name="Howland T.J."/>
            <person name="Wei M.-H."/>
            <person name="Ibegwam C."/>
            <person name="Jalali M."/>
            <person name="Kalush F."/>
            <person name="Karpen G.H."/>
            <person name="Ke Z."/>
            <person name="Kennison J.A."/>
            <person name="Ketchum K.A."/>
            <person name="Kimmel B.E."/>
            <person name="Kodira C.D."/>
            <person name="Kraft C.L."/>
            <person name="Kravitz S."/>
            <person name="Kulp D."/>
            <person name="Lai Z."/>
            <person name="Lasko P."/>
            <person name="Lei Y."/>
            <person name="Levitsky A.A."/>
            <person name="Li J.H."/>
            <person name="Li Z."/>
            <person name="Liang Y."/>
            <person name="Lin X."/>
            <person name="Liu X."/>
            <person name="Mattei B."/>
            <person name="McIntosh T.C."/>
            <person name="McLeod M.P."/>
            <person name="McPherson D."/>
            <person name="Merkulov G."/>
            <person name="Milshina N.V."/>
            <person name="Mobarry C."/>
            <person name="Morris J."/>
            <person name="Moshrefi A."/>
            <person name="Mount S.M."/>
            <person name="Moy M."/>
            <person name="Murphy B."/>
            <person name="Murphy L."/>
            <person name="Muzny D.M."/>
            <person name="Nelson D.L."/>
            <person name="Nelson D.R."/>
            <person name="Nelson K.A."/>
            <person name="Nixon K."/>
            <person name="Nusskern D.R."/>
            <person name="Pacleb J.M."/>
            <person name="Palazzolo M."/>
            <person name="Pittman G.S."/>
            <person name="Pan S."/>
            <person name="Pollard J."/>
            <person name="Puri V."/>
            <person name="Reese M.G."/>
            <person name="Reinert K."/>
            <person name="Remington K."/>
            <person name="Saunders R.D.C."/>
            <person name="Scheeler F."/>
            <person name="Shen H."/>
            <person name="Shue B.C."/>
            <person name="Siden-Kiamos I."/>
            <person name="Simpson M."/>
            <person name="Skupski M.P."/>
            <person name="Smith T.J."/>
            <person name="Spier E."/>
            <person name="Spradling A.C."/>
            <person name="Stapleton M."/>
            <person name="Strong R."/>
            <person name="Sun E."/>
            <person name="Svirskas R."/>
            <person name="Tector C."/>
            <person name="Turner R."/>
            <person name="Venter E."/>
            <person name="Wang A.H."/>
            <person name="Wang X."/>
            <person name="Wang Z.-Y."/>
            <person name="Wassarman D.A."/>
            <person name="Weinstock G.M."/>
            <person name="Weissenbach J."/>
            <person name="Williams S.M."/>
            <person name="Woodage T."/>
            <person name="Worley K.C."/>
            <person name="Wu D."/>
            <person name="Yang S."/>
            <person name="Yao Q.A."/>
            <person name="Ye J."/>
            <person name="Yeh R.-F."/>
            <person name="Zaveri J.S."/>
            <person name="Zhan M."/>
            <person name="Zhang G."/>
            <person name="Zhao Q."/>
            <person name="Zheng L."/>
            <person name="Zheng X.H."/>
            <person name="Zhong F.N."/>
            <person name="Zhong W."/>
            <person name="Zhou X."/>
            <person name="Zhu S.C."/>
            <person name="Zhu X."/>
            <person name="Smith H.O."/>
            <person name="Gibbs R.A."/>
            <person name="Myers E.W."/>
            <person name="Rubin G.M."/>
            <person name="Venter J.C."/>
        </authorList>
    </citation>
    <scope>NUCLEOTIDE SEQUENCE [LARGE SCALE GENOMIC DNA]</scope>
    <source>
        <strain>Berkeley</strain>
    </source>
</reference>
<reference key="2">
    <citation type="journal article" date="2002" name="Genome Biol.">
        <title>Annotation of the Drosophila melanogaster euchromatic genome: a systematic review.</title>
        <authorList>
            <person name="Misra S."/>
            <person name="Crosby M.A."/>
            <person name="Mungall C.J."/>
            <person name="Matthews B.B."/>
            <person name="Campbell K.S."/>
            <person name="Hradecky P."/>
            <person name="Huang Y."/>
            <person name="Kaminker J.S."/>
            <person name="Millburn G.H."/>
            <person name="Prochnik S.E."/>
            <person name="Smith C.D."/>
            <person name="Tupy J.L."/>
            <person name="Whitfield E.J."/>
            <person name="Bayraktaroglu L."/>
            <person name="Berman B.P."/>
            <person name="Bettencourt B.R."/>
            <person name="Celniker S.E."/>
            <person name="de Grey A.D.N.J."/>
            <person name="Drysdale R.A."/>
            <person name="Harris N.L."/>
            <person name="Richter J."/>
            <person name="Russo S."/>
            <person name="Schroeder A.J."/>
            <person name="Shu S.Q."/>
            <person name="Stapleton M."/>
            <person name="Yamada C."/>
            <person name="Ashburner M."/>
            <person name="Gelbart W.M."/>
            <person name="Rubin G.M."/>
            <person name="Lewis S.E."/>
        </authorList>
    </citation>
    <scope>GENOME REANNOTATION</scope>
    <source>
        <strain>Berkeley</strain>
    </source>
</reference>
<reference key="3">
    <citation type="submission" date="2006-06" db="EMBL/GenBank/DDBJ databases">
        <authorList>
            <person name="Stapleton M."/>
            <person name="Carlson J.W."/>
            <person name="Chavez C."/>
            <person name="Frise E."/>
            <person name="George R.A."/>
            <person name="Pacleb J.M."/>
            <person name="Park S."/>
            <person name="Wan K.H."/>
            <person name="Yu C."/>
            <person name="Celniker S.E."/>
        </authorList>
    </citation>
    <scope>NUCLEOTIDE SEQUENCE [LARGE SCALE MRNA]</scope>
    <source>
        <strain>Berkeley</strain>
    </source>
</reference>
<evidence type="ECO:0000250" key="1"/>
<evidence type="ECO:0000305" key="2"/>
<dbReference type="EMBL" id="AE014298">
    <property type="protein sequence ID" value="AAF48265.1"/>
    <property type="molecule type" value="Genomic_DNA"/>
</dbReference>
<dbReference type="EMBL" id="BT025812">
    <property type="protein sequence ID" value="ABF85712.1"/>
    <property type="molecule type" value="mRNA"/>
</dbReference>
<dbReference type="RefSeq" id="NP_001285208.1">
    <property type="nucleotide sequence ID" value="NM_001298279.1"/>
</dbReference>
<dbReference type="RefSeq" id="NP_572881.1">
    <property type="nucleotide sequence ID" value="NM_132653.2"/>
</dbReference>
<dbReference type="SMR" id="Q9VYD7"/>
<dbReference type="BioGRID" id="58674">
    <property type="interactions" value="9"/>
</dbReference>
<dbReference type="DIP" id="DIP-17691N"/>
<dbReference type="FunCoup" id="Q9VYD7">
    <property type="interactions" value="1775"/>
</dbReference>
<dbReference type="IntAct" id="Q9VYD7">
    <property type="interactions" value="10"/>
</dbReference>
<dbReference type="STRING" id="7227.FBpp0073606"/>
<dbReference type="PaxDb" id="7227-FBpp0073606"/>
<dbReference type="DNASU" id="32294"/>
<dbReference type="EnsemblMetazoa" id="FBtr0073775">
    <property type="protein sequence ID" value="FBpp0073606"/>
    <property type="gene ID" value="FBgn0030480"/>
</dbReference>
<dbReference type="EnsemblMetazoa" id="FBtr0343147">
    <property type="protein sequence ID" value="FBpp0309846"/>
    <property type="gene ID" value="FBgn0030480"/>
</dbReference>
<dbReference type="GeneID" id="32294"/>
<dbReference type="KEGG" id="dme:Dmel_CG1660"/>
<dbReference type="UCSC" id="CG1660-RA">
    <property type="organism name" value="d. melanogaster"/>
</dbReference>
<dbReference type="AGR" id="FB:FBgn0030480"/>
<dbReference type="CTD" id="32294"/>
<dbReference type="FlyBase" id="FBgn0030480">
    <property type="gene designation" value="Tim9a"/>
</dbReference>
<dbReference type="VEuPathDB" id="VectorBase:FBgn0030480"/>
<dbReference type="eggNOG" id="KOG3479">
    <property type="taxonomic scope" value="Eukaryota"/>
</dbReference>
<dbReference type="HOGENOM" id="CLU_141397_3_3_1"/>
<dbReference type="InParanoid" id="Q9VYD7"/>
<dbReference type="OMA" id="QDFLRMY"/>
<dbReference type="OrthoDB" id="1551503at2759"/>
<dbReference type="PhylomeDB" id="Q9VYD7"/>
<dbReference type="Reactome" id="R-DME-1268020">
    <property type="pathway name" value="Mitochondrial protein import"/>
</dbReference>
<dbReference type="BioGRID-ORCS" id="32294">
    <property type="hits" value="0 hits in 1 CRISPR screen"/>
</dbReference>
<dbReference type="ChiTaRS" id="Tim9b">
    <property type="organism name" value="fly"/>
</dbReference>
<dbReference type="GenomeRNAi" id="32294"/>
<dbReference type="PRO" id="PR:Q9VYD7"/>
<dbReference type="Proteomes" id="UP000000803">
    <property type="component" value="Chromosome X"/>
</dbReference>
<dbReference type="Bgee" id="FBgn0030480">
    <property type="expression patterns" value="Expressed in adult class III enteroendocrine cell in adult midgut (Drosophila) and 134 other cell types or tissues"/>
</dbReference>
<dbReference type="ExpressionAtlas" id="Q9VYD7">
    <property type="expression patterns" value="baseline and differential"/>
</dbReference>
<dbReference type="GO" id="GO:0042719">
    <property type="term" value="C:mitochondrial intermembrane space protein transporter complex"/>
    <property type="evidence" value="ECO:0000250"/>
    <property type="project" value="FlyBase"/>
</dbReference>
<dbReference type="GO" id="GO:0042721">
    <property type="term" value="C:TIM22 mitochondrial import inner membrane insertion complex"/>
    <property type="evidence" value="ECO:0000250"/>
    <property type="project" value="FlyBase"/>
</dbReference>
<dbReference type="GO" id="GO:0046872">
    <property type="term" value="F:metal ion binding"/>
    <property type="evidence" value="ECO:0007669"/>
    <property type="project" value="UniProtKB-KW"/>
</dbReference>
<dbReference type="GO" id="GO:0051082">
    <property type="term" value="F:unfolded protein binding"/>
    <property type="evidence" value="ECO:0000250"/>
    <property type="project" value="FlyBase"/>
</dbReference>
<dbReference type="GO" id="GO:0045039">
    <property type="term" value="P:protein insertion into mitochondrial inner membrane"/>
    <property type="evidence" value="ECO:0000250"/>
    <property type="project" value="FlyBase"/>
</dbReference>
<dbReference type="FunFam" id="1.10.287.810:FF:000004">
    <property type="entry name" value="Mitochondrial import inner membrane translocase subunit Tim9"/>
    <property type="match status" value="1"/>
</dbReference>
<dbReference type="Gene3D" id="1.10.287.810">
    <property type="entry name" value="Mitochondrial import inner membrane translocase subunit tim13 like domains"/>
    <property type="match status" value="1"/>
</dbReference>
<dbReference type="InterPro" id="IPR050673">
    <property type="entry name" value="Mito_inner_translocase_sub"/>
</dbReference>
<dbReference type="InterPro" id="IPR004217">
    <property type="entry name" value="Tim10-like"/>
</dbReference>
<dbReference type="InterPro" id="IPR035427">
    <property type="entry name" value="Tim10-like_dom_sf"/>
</dbReference>
<dbReference type="PANTHER" id="PTHR13172">
    <property type="entry name" value="MITOCHONDRIAL IMPORT INNER MEMBRANE TRANSLOCASE SUBUNIT TIM9B"/>
    <property type="match status" value="1"/>
</dbReference>
<dbReference type="Pfam" id="PF02953">
    <property type="entry name" value="zf-Tim10_DDP"/>
    <property type="match status" value="1"/>
</dbReference>
<dbReference type="SUPFAM" id="SSF144122">
    <property type="entry name" value="Tim10-like"/>
    <property type="match status" value="1"/>
</dbReference>
<accession>Q9VYD7</accession>
<accession>Q1ECC2</accession>
<gene>
    <name type="primary">Tim9a</name>
    <name type="synonym">Tim9</name>
    <name type="ORF">CG1660</name>
</gene>
<organism>
    <name type="scientific">Drosophila melanogaster</name>
    <name type="common">Fruit fly</name>
    <dbReference type="NCBI Taxonomy" id="7227"/>
    <lineage>
        <taxon>Eukaryota</taxon>
        <taxon>Metazoa</taxon>
        <taxon>Ecdysozoa</taxon>
        <taxon>Arthropoda</taxon>
        <taxon>Hexapoda</taxon>
        <taxon>Insecta</taxon>
        <taxon>Pterygota</taxon>
        <taxon>Neoptera</taxon>
        <taxon>Endopterygota</taxon>
        <taxon>Diptera</taxon>
        <taxon>Brachycera</taxon>
        <taxon>Muscomorpha</taxon>
        <taxon>Ephydroidea</taxon>
        <taxon>Drosophilidae</taxon>
        <taxon>Drosophila</taxon>
        <taxon>Sophophora</taxon>
    </lineage>
</organism>
<comment type="function">
    <text evidence="1">Mitochondrial intermembrane chaperone that participates in the import and insertion of multi-pass transmembrane proteins into the mitochondrial inner membrane. May also be required for the transfer of beta-barrel precursors from the TOM complex to the sorting and assembly machinery (SAM complex) of the outer membrane. Acts as a chaperone-like protein that protects the hydrophobic precursors from aggregation and guide them through the mitochondrial intermembrane space (By similarity).</text>
</comment>
<comment type="subunit">
    <text evidence="1">Heterohexamer; composed of 3 copies of Tim9 and 3 copies of Tim10, named soluble 70 kDa complex. The complex associates with the Tim22 component of the TIM22 complex. Interacts with multi-pass transmembrane proteins in transit (By similarity).</text>
</comment>
<comment type="subcellular location">
    <subcellularLocation>
        <location evidence="1">Mitochondrion inner membrane</location>
        <topology evidence="1">Peripheral membrane protein</topology>
        <orientation evidence="1">Intermembrane side</orientation>
    </subcellularLocation>
</comment>
<comment type="domain">
    <text evidence="1">The twin CX3C motif contains 4 conserved Cys residues that form 2 disulfide bonds in the mitochondrial intermembrane space. However, during the transit of Tim9 from cytoplasm into mitochondrion, the Cys residues probably coordinate zinc, thereby preventing folding and allowing its transfer across mitochondrial outer membrane (By similarity).</text>
</comment>
<comment type="similarity">
    <text evidence="2">Belongs to the small Tim family.</text>
</comment>
<feature type="chain" id="PRO_0000193603" description="Mitochondrial import inner membrane translocase subunit Tim9">
    <location>
        <begin position="1"/>
        <end position="95"/>
    </location>
</feature>
<feature type="short sequence motif" description="Twin CX3C motif">
    <location>
        <begin position="35"/>
        <end position="59"/>
    </location>
</feature>
<feature type="disulfide bond" evidence="1">
    <location>
        <begin position="35"/>
        <end position="59"/>
    </location>
</feature>
<feature type="disulfide bond" evidence="1">
    <location>
        <begin position="39"/>
        <end position="55"/>
    </location>
</feature>
<name>TIM9_DROME</name>
<keyword id="KW-0143">Chaperone</keyword>
<keyword id="KW-1015">Disulfide bond</keyword>
<keyword id="KW-0472">Membrane</keyword>
<keyword id="KW-0479">Metal-binding</keyword>
<keyword id="KW-0496">Mitochondrion</keyword>
<keyword id="KW-0999">Mitochondrion inner membrane</keyword>
<keyword id="KW-0653">Protein transport</keyword>
<keyword id="KW-1185">Reference proteome</keyword>
<keyword id="KW-0811">Translocation</keyword>
<keyword id="KW-0813">Transport</keyword>
<keyword id="KW-0862">Zinc</keyword>